<comment type="function">
    <text evidence="1">NDH-1 shuttles electrons from NADH, via FMN and iron-sulfur (Fe-S) centers, to quinones in the respiratory chain. The immediate electron acceptor for the enzyme in this species is believed to be ubiquinone. Couples the redox reaction to proton translocation (for every two electrons transferred, four hydrogen ions are translocated across the cytoplasmic membrane), and thus conserves the redox energy in a proton gradient.</text>
</comment>
<comment type="catalytic activity">
    <reaction evidence="1">
        <text>a quinone + NADH + 5 H(+)(in) = a quinol + NAD(+) + 4 H(+)(out)</text>
        <dbReference type="Rhea" id="RHEA:57888"/>
        <dbReference type="ChEBI" id="CHEBI:15378"/>
        <dbReference type="ChEBI" id="CHEBI:24646"/>
        <dbReference type="ChEBI" id="CHEBI:57540"/>
        <dbReference type="ChEBI" id="CHEBI:57945"/>
        <dbReference type="ChEBI" id="CHEBI:132124"/>
    </reaction>
</comment>
<comment type="subunit">
    <text evidence="1">NDH-1 is composed of 14 different subunits. Subunits NuoB, C, D, E, F, and G constitute the peripheral sector of the complex.</text>
</comment>
<comment type="subcellular location">
    <subcellularLocation>
        <location evidence="1">Cell membrane</location>
        <topology evidence="1">Peripheral membrane protein</topology>
        <orientation evidence="1">Cytoplasmic side</orientation>
    </subcellularLocation>
</comment>
<comment type="similarity">
    <text evidence="1">Belongs to the complex I 49 kDa subunit family.</text>
</comment>
<evidence type="ECO:0000255" key="1">
    <source>
        <dbReference type="HAMAP-Rule" id="MF_01358"/>
    </source>
</evidence>
<dbReference type="EC" id="7.1.1.-" evidence="1"/>
<dbReference type="EMBL" id="CP000909">
    <property type="protein sequence ID" value="ABY36098.1"/>
    <property type="molecule type" value="Genomic_DNA"/>
</dbReference>
<dbReference type="RefSeq" id="YP_001636487.1">
    <property type="nucleotide sequence ID" value="NC_010175.1"/>
</dbReference>
<dbReference type="SMR" id="A9WFB4"/>
<dbReference type="STRING" id="324602.Caur_2899"/>
<dbReference type="EnsemblBacteria" id="ABY36098">
    <property type="protein sequence ID" value="ABY36098"/>
    <property type="gene ID" value="Caur_2899"/>
</dbReference>
<dbReference type="KEGG" id="cau:Caur_2899"/>
<dbReference type="PATRIC" id="fig|324602.8.peg.3265"/>
<dbReference type="eggNOG" id="COG0649">
    <property type="taxonomic scope" value="Bacteria"/>
</dbReference>
<dbReference type="HOGENOM" id="CLU_015134_1_2_0"/>
<dbReference type="InParanoid" id="A9WFB4"/>
<dbReference type="Proteomes" id="UP000002008">
    <property type="component" value="Chromosome"/>
</dbReference>
<dbReference type="GO" id="GO:0005886">
    <property type="term" value="C:plasma membrane"/>
    <property type="evidence" value="ECO:0007669"/>
    <property type="project" value="UniProtKB-SubCell"/>
</dbReference>
<dbReference type="GO" id="GO:0051287">
    <property type="term" value="F:NAD binding"/>
    <property type="evidence" value="ECO:0007669"/>
    <property type="project" value="InterPro"/>
</dbReference>
<dbReference type="GO" id="GO:0050136">
    <property type="term" value="F:NADH:ubiquinone reductase (non-electrogenic) activity"/>
    <property type="evidence" value="ECO:0007669"/>
    <property type="project" value="UniProtKB-UniRule"/>
</dbReference>
<dbReference type="GO" id="GO:0048038">
    <property type="term" value="F:quinone binding"/>
    <property type="evidence" value="ECO:0007669"/>
    <property type="project" value="UniProtKB-KW"/>
</dbReference>
<dbReference type="Gene3D" id="1.10.645.10">
    <property type="entry name" value="Cytochrome-c3 Hydrogenase, chain B"/>
    <property type="match status" value="1"/>
</dbReference>
<dbReference type="HAMAP" id="MF_01358">
    <property type="entry name" value="NDH1_NuoD"/>
    <property type="match status" value="1"/>
</dbReference>
<dbReference type="InterPro" id="IPR001135">
    <property type="entry name" value="NADH_Q_OxRdtase_suD"/>
</dbReference>
<dbReference type="InterPro" id="IPR014029">
    <property type="entry name" value="NADH_UbQ_OxRdtase_49kDa_CS"/>
</dbReference>
<dbReference type="InterPro" id="IPR022885">
    <property type="entry name" value="NDH1_su_D/H"/>
</dbReference>
<dbReference type="InterPro" id="IPR029014">
    <property type="entry name" value="NiFe-Hase_large"/>
</dbReference>
<dbReference type="NCBIfam" id="TIGR01962">
    <property type="entry name" value="NuoD"/>
    <property type="match status" value="1"/>
</dbReference>
<dbReference type="NCBIfam" id="NF004739">
    <property type="entry name" value="PRK06075.1"/>
    <property type="match status" value="1"/>
</dbReference>
<dbReference type="PANTHER" id="PTHR11993:SF10">
    <property type="entry name" value="NADH DEHYDROGENASE [UBIQUINONE] IRON-SULFUR PROTEIN 2, MITOCHONDRIAL"/>
    <property type="match status" value="1"/>
</dbReference>
<dbReference type="PANTHER" id="PTHR11993">
    <property type="entry name" value="NADH-UBIQUINONE OXIDOREDUCTASE 49 KDA SUBUNIT"/>
    <property type="match status" value="1"/>
</dbReference>
<dbReference type="Pfam" id="PF00346">
    <property type="entry name" value="Complex1_49kDa"/>
    <property type="match status" value="1"/>
</dbReference>
<dbReference type="SUPFAM" id="SSF56762">
    <property type="entry name" value="HydB/Nqo4-like"/>
    <property type="match status" value="1"/>
</dbReference>
<dbReference type="PROSITE" id="PS00535">
    <property type="entry name" value="COMPLEX1_49K"/>
    <property type="match status" value="1"/>
</dbReference>
<accession>A9WFB4</accession>
<sequence length="411" mass="45712">MTEPITVPTPQQIIEPAVAGRTETMVLNMGPHHPSTHGVLRLVLELDGEVVVNVAPDVGYLHTGIEKTMESKTYQKAVVLTDRMDYLAPLSNNLCYALAVEKLLDVEIPERAQIARVLLTELQRISSHLVWLGTHALDLAAMSVFLYAFREREQILDIFELVSGARMMTSYFRIGGLAYDLPSDFIPTVEQFLAVMPSRIDEYEDLLTANPLWLERTVGVGVIDAQSAIALGLTGANLRATGVAYDVRKAMPYSGYETYSFEIPVGKNGDIYDRYRVRIAEMRQSVKIVQQATERLRELGPGPVVTSNRKVAPPPKREITESMESLIHHFKLWTEGFKPPRGDAYVSIESPRGILGCYVVSDGSPKPWRVHFRAPSFINLQSLAHMAKGRMVADLVALIASLDPVLGEVDR</sequence>
<protein>
    <recommendedName>
        <fullName evidence="1">NADH-quinone oxidoreductase subunit D 2</fullName>
        <ecNumber evidence="1">7.1.1.-</ecNumber>
    </recommendedName>
    <alternativeName>
        <fullName evidence="1">NADH dehydrogenase I subunit D 2</fullName>
    </alternativeName>
    <alternativeName>
        <fullName evidence="1">NDH-1 subunit D 2</fullName>
    </alternativeName>
</protein>
<name>NUOD2_CHLAA</name>
<gene>
    <name evidence="1" type="primary">nuoD2</name>
    <name type="ordered locus">Caur_2899</name>
</gene>
<proteinExistence type="inferred from homology"/>
<feature type="chain" id="PRO_0000357799" description="NADH-quinone oxidoreductase subunit D 2">
    <location>
        <begin position="1"/>
        <end position="411"/>
    </location>
</feature>
<keyword id="KW-1003">Cell membrane</keyword>
<keyword id="KW-0472">Membrane</keyword>
<keyword id="KW-0520">NAD</keyword>
<keyword id="KW-0874">Quinone</keyword>
<keyword id="KW-1185">Reference proteome</keyword>
<keyword id="KW-1278">Translocase</keyword>
<keyword id="KW-0813">Transport</keyword>
<keyword id="KW-0830">Ubiquinone</keyword>
<reference key="1">
    <citation type="journal article" date="2011" name="BMC Genomics">
        <title>Complete genome sequence of the filamentous anoxygenic phototrophic bacterium Chloroflexus aurantiacus.</title>
        <authorList>
            <person name="Tang K.H."/>
            <person name="Barry K."/>
            <person name="Chertkov O."/>
            <person name="Dalin E."/>
            <person name="Han C.S."/>
            <person name="Hauser L.J."/>
            <person name="Honchak B.M."/>
            <person name="Karbach L.E."/>
            <person name="Land M.L."/>
            <person name="Lapidus A."/>
            <person name="Larimer F.W."/>
            <person name="Mikhailova N."/>
            <person name="Pitluck S."/>
            <person name="Pierson B.K."/>
            <person name="Blankenship R.E."/>
        </authorList>
    </citation>
    <scope>NUCLEOTIDE SEQUENCE [LARGE SCALE GENOMIC DNA]</scope>
    <source>
        <strain>ATCC 29366 / DSM 635 / J-10-fl</strain>
    </source>
</reference>
<organism>
    <name type="scientific">Chloroflexus aurantiacus (strain ATCC 29366 / DSM 635 / J-10-fl)</name>
    <dbReference type="NCBI Taxonomy" id="324602"/>
    <lineage>
        <taxon>Bacteria</taxon>
        <taxon>Bacillati</taxon>
        <taxon>Chloroflexota</taxon>
        <taxon>Chloroflexia</taxon>
        <taxon>Chloroflexales</taxon>
        <taxon>Chloroflexineae</taxon>
        <taxon>Chloroflexaceae</taxon>
        <taxon>Chloroflexus</taxon>
    </lineage>
</organism>